<protein>
    <recommendedName>
        <fullName>F-box protein At4g35733</fullName>
    </recommendedName>
</protein>
<dbReference type="EMBL" id="AL031135">
    <property type="protein sequence ID" value="CAA20044.1"/>
    <property type="status" value="ALT_SEQ"/>
    <property type="molecule type" value="Genomic_DNA"/>
</dbReference>
<dbReference type="EMBL" id="AL161588">
    <property type="protein sequence ID" value="CAB81483.1"/>
    <property type="status" value="ALT_SEQ"/>
    <property type="molecule type" value="Genomic_DNA"/>
</dbReference>
<dbReference type="EMBL" id="CP002687">
    <property type="protein sequence ID" value="AEE86555.1"/>
    <property type="molecule type" value="Genomic_DNA"/>
</dbReference>
<dbReference type="PIR" id="T04679">
    <property type="entry name" value="T04679"/>
</dbReference>
<dbReference type="RefSeq" id="NP_001119124.1">
    <property type="nucleotide sequence ID" value="NM_001125652.1"/>
</dbReference>
<dbReference type="iPTMnet" id="B3H6C3"/>
<dbReference type="PaxDb" id="3702-AT4G35733.1"/>
<dbReference type="EnsemblPlants" id="AT4G35733.1">
    <property type="protein sequence ID" value="AT4G35733.1"/>
    <property type="gene ID" value="AT4G35733"/>
</dbReference>
<dbReference type="GeneID" id="6240365"/>
<dbReference type="Gramene" id="AT4G35733.1">
    <property type="protein sequence ID" value="AT4G35733.1"/>
    <property type="gene ID" value="AT4G35733"/>
</dbReference>
<dbReference type="KEGG" id="ath:AT4G35733"/>
<dbReference type="Araport" id="AT4G35733"/>
<dbReference type="TAIR" id="AT4G35733">
    <property type="gene designation" value="ATFDA18"/>
</dbReference>
<dbReference type="eggNOG" id="ENOG502RY64">
    <property type="taxonomic scope" value="Eukaryota"/>
</dbReference>
<dbReference type="HOGENOM" id="CLU_019286_1_0_1"/>
<dbReference type="InParanoid" id="B3H6C3"/>
<dbReference type="OMA" id="THFDERN"/>
<dbReference type="PhylomeDB" id="B3H6C3"/>
<dbReference type="UniPathway" id="UPA00143"/>
<dbReference type="PRO" id="PR:B3H6C3"/>
<dbReference type="Proteomes" id="UP000006548">
    <property type="component" value="Chromosome 4"/>
</dbReference>
<dbReference type="ExpressionAtlas" id="B3H6C3">
    <property type="expression patterns" value="baseline and differential"/>
</dbReference>
<dbReference type="GO" id="GO:0016567">
    <property type="term" value="P:protein ubiquitination"/>
    <property type="evidence" value="ECO:0007669"/>
    <property type="project" value="UniProtKB-UniPathway"/>
</dbReference>
<dbReference type="InterPro" id="IPR036047">
    <property type="entry name" value="F-box-like_dom_sf"/>
</dbReference>
<dbReference type="InterPro" id="IPR001810">
    <property type="entry name" value="F-box_dom"/>
</dbReference>
<dbReference type="InterPro" id="IPR005174">
    <property type="entry name" value="KIB1-4_b-propeller"/>
</dbReference>
<dbReference type="InterPro" id="IPR051304">
    <property type="entry name" value="SCF_F-box_domain"/>
</dbReference>
<dbReference type="PANTHER" id="PTHR47123:SF25">
    <property type="entry name" value="F-BOX PROTEIN"/>
    <property type="match status" value="1"/>
</dbReference>
<dbReference type="PANTHER" id="PTHR47123">
    <property type="entry name" value="F-BOX PROTEIN SKIP23"/>
    <property type="match status" value="1"/>
</dbReference>
<dbReference type="Pfam" id="PF03478">
    <property type="entry name" value="Beta-prop_KIB1-4"/>
    <property type="match status" value="1"/>
</dbReference>
<dbReference type="Pfam" id="PF00646">
    <property type="entry name" value="F-box"/>
    <property type="match status" value="1"/>
</dbReference>
<dbReference type="SMART" id="SM00256">
    <property type="entry name" value="FBOX"/>
    <property type="match status" value="1"/>
</dbReference>
<dbReference type="SUPFAM" id="SSF81383">
    <property type="entry name" value="F-box domain"/>
    <property type="match status" value="1"/>
</dbReference>
<name>FB311_ARATH</name>
<proteinExistence type="evidence at transcript level"/>
<organism>
    <name type="scientific">Arabidopsis thaliana</name>
    <name type="common">Mouse-ear cress</name>
    <dbReference type="NCBI Taxonomy" id="3702"/>
    <lineage>
        <taxon>Eukaryota</taxon>
        <taxon>Viridiplantae</taxon>
        <taxon>Streptophyta</taxon>
        <taxon>Embryophyta</taxon>
        <taxon>Tracheophyta</taxon>
        <taxon>Spermatophyta</taxon>
        <taxon>Magnoliopsida</taxon>
        <taxon>eudicotyledons</taxon>
        <taxon>Gunneridae</taxon>
        <taxon>Pentapetalae</taxon>
        <taxon>rosids</taxon>
        <taxon>malvids</taxon>
        <taxon>Brassicales</taxon>
        <taxon>Brassicaceae</taxon>
        <taxon>Camelineae</taxon>
        <taxon>Arabidopsis</taxon>
    </lineage>
</organism>
<accession>B3H6C3</accession>
<accession>O81805</accession>
<reference key="1">
    <citation type="journal article" date="1999" name="Nature">
        <title>Sequence and analysis of chromosome 4 of the plant Arabidopsis thaliana.</title>
        <authorList>
            <person name="Mayer K.F.X."/>
            <person name="Schueller C."/>
            <person name="Wambutt R."/>
            <person name="Murphy G."/>
            <person name="Volckaert G."/>
            <person name="Pohl T."/>
            <person name="Duesterhoeft A."/>
            <person name="Stiekema W."/>
            <person name="Entian K.-D."/>
            <person name="Terryn N."/>
            <person name="Harris B."/>
            <person name="Ansorge W."/>
            <person name="Brandt P."/>
            <person name="Grivell L.A."/>
            <person name="Rieger M."/>
            <person name="Weichselgartner M."/>
            <person name="de Simone V."/>
            <person name="Obermaier B."/>
            <person name="Mache R."/>
            <person name="Mueller M."/>
            <person name="Kreis M."/>
            <person name="Delseny M."/>
            <person name="Puigdomenech P."/>
            <person name="Watson M."/>
            <person name="Schmidtheini T."/>
            <person name="Reichert B."/>
            <person name="Portetelle D."/>
            <person name="Perez-Alonso M."/>
            <person name="Boutry M."/>
            <person name="Bancroft I."/>
            <person name="Vos P."/>
            <person name="Hoheisel J."/>
            <person name="Zimmermann W."/>
            <person name="Wedler H."/>
            <person name="Ridley P."/>
            <person name="Langham S.-A."/>
            <person name="McCullagh B."/>
            <person name="Bilham L."/>
            <person name="Robben J."/>
            <person name="van der Schueren J."/>
            <person name="Grymonprez B."/>
            <person name="Chuang Y.-J."/>
            <person name="Vandenbussche F."/>
            <person name="Braeken M."/>
            <person name="Weltjens I."/>
            <person name="Voet M."/>
            <person name="Bastiaens I."/>
            <person name="Aert R."/>
            <person name="Defoor E."/>
            <person name="Weitzenegger T."/>
            <person name="Bothe G."/>
            <person name="Ramsperger U."/>
            <person name="Hilbert H."/>
            <person name="Braun M."/>
            <person name="Holzer E."/>
            <person name="Brandt A."/>
            <person name="Peters S."/>
            <person name="van Staveren M."/>
            <person name="Dirkse W."/>
            <person name="Mooijman P."/>
            <person name="Klein Lankhorst R."/>
            <person name="Rose M."/>
            <person name="Hauf J."/>
            <person name="Koetter P."/>
            <person name="Berneiser S."/>
            <person name="Hempel S."/>
            <person name="Feldpausch M."/>
            <person name="Lamberth S."/>
            <person name="Van den Daele H."/>
            <person name="De Keyser A."/>
            <person name="Buysshaert C."/>
            <person name="Gielen J."/>
            <person name="Villarroel R."/>
            <person name="De Clercq R."/>
            <person name="van Montagu M."/>
            <person name="Rogers J."/>
            <person name="Cronin A."/>
            <person name="Quail M.A."/>
            <person name="Bray-Allen S."/>
            <person name="Clark L."/>
            <person name="Doggett J."/>
            <person name="Hall S."/>
            <person name="Kay M."/>
            <person name="Lennard N."/>
            <person name="McLay K."/>
            <person name="Mayes R."/>
            <person name="Pettett A."/>
            <person name="Rajandream M.A."/>
            <person name="Lyne M."/>
            <person name="Benes V."/>
            <person name="Rechmann S."/>
            <person name="Borkova D."/>
            <person name="Bloecker H."/>
            <person name="Scharfe M."/>
            <person name="Grimm M."/>
            <person name="Loehnert T.-H."/>
            <person name="Dose S."/>
            <person name="de Haan M."/>
            <person name="Maarse A.C."/>
            <person name="Schaefer M."/>
            <person name="Mueller-Auer S."/>
            <person name="Gabel C."/>
            <person name="Fuchs M."/>
            <person name="Fartmann B."/>
            <person name="Granderath K."/>
            <person name="Dauner D."/>
            <person name="Herzl A."/>
            <person name="Neumann S."/>
            <person name="Argiriou A."/>
            <person name="Vitale D."/>
            <person name="Liguori R."/>
            <person name="Piravandi E."/>
            <person name="Massenet O."/>
            <person name="Quigley F."/>
            <person name="Clabauld G."/>
            <person name="Muendlein A."/>
            <person name="Felber R."/>
            <person name="Schnabl S."/>
            <person name="Hiller R."/>
            <person name="Schmidt W."/>
            <person name="Lecharny A."/>
            <person name="Aubourg S."/>
            <person name="Chefdor F."/>
            <person name="Cooke R."/>
            <person name="Berger C."/>
            <person name="Monfort A."/>
            <person name="Casacuberta E."/>
            <person name="Gibbons T."/>
            <person name="Weber N."/>
            <person name="Vandenbol M."/>
            <person name="Bargues M."/>
            <person name="Terol J."/>
            <person name="Torres A."/>
            <person name="Perez-Perez A."/>
            <person name="Purnelle B."/>
            <person name="Bent E."/>
            <person name="Johnson S."/>
            <person name="Tacon D."/>
            <person name="Jesse T."/>
            <person name="Heijnen L."/>
            <person name="Schwarz S."/>
            <person name="Scholler P."/>
            <person name="Heber S."/>
            <person name="Francs P."/>
            <person name="Bielke C."/>
            <person name="Frishman D."/>
            <person name="Haase D."/>
            <person name="Lemcke K."/>
            <person name="Mewes H.-W."/>
            <person name="Stocker S."/>
            <person name="Zaccaria P."/>
            <person name="Bevan M."/>
            <person name="Wilson R.K."/>
            <person name="de la Bastide M."/>
            <person name="Habermann K."/>
            <person name="Parnell L."/>
            <person name="Dedhia N."/>
            <person name="Gnoj L."/>
            <person name="Schutz K."/>
            <person name="Huang E."/>
            <person name="Spiegel L."/>
            <person name="Sekhon M."/>
            <person name="Murray J."/>
            <person name="Sheet P."/>
            <person name="Cordes M."/>
            <person name="Abu-Threideh J."/>
            <person name="Stoneking T."/>
            <person name="Kalicki J."/>
            <person name="Graves T."/>
            <person name="Harmon G."/>
            <person name="Edwards J."/>
            <person name="Latreille P."/>
            <person name="Courtney L."/>
            <person name="Cloud J."/>
            <person name="Abbott A."/>
            <person name="Scott K."/>
            <person name="Johnson D."/>
            <person name="Minx P."/>
            <person name="Bentley D."/>
            <person name="Fulton B."/>
            <person name="Miller N."/>
            <person name="Greco T."/>
            <person name="Kemp K."/>
            <person name="Kramer J."/>
            <person name="Fulton L."/>
            <person name="Mardis E."/>
            <person name="Dante M."/>
            <person name="Pepin K."/>
            <person name="Hillier L.W."/>
            <person name="Nelson J."/>
            <person name="Spieth J."/>
            <person name="Ryan E."/>
            <person name="Andrews S."/>
            <person name="Geisel C."/>
            <person name="Layman D."/>
            <person name="Du H."/>
            <person name="Ali J."/>
            <person name="Berghoff A."/>
            <person name="Jones K."/>
            <person name="Drone K."/>
            <person name="Cotton M."/>
            <person name="Joshu C."/>
            <person name="Antonoiu B."/>
            <person name="Zidanic M."/>
            <person name="Strong C."/>
            <person name="Sun H."/>
            <person name="Lamar B."/>
            <person name="Yordan C."/>
            <person name="Ma P."/>
            <person name="Zhong J."/>
            <person name="Preston R."/>
            <person name="Vil D."/>
            <person name="Shekher M."/>
            <person name="Matero A."/>
            <person name="Shah R."/>
            <person name="Swaby I.K."/>
            <person name="O'Shaughnessy A."/>
            <person name="Rodriguez M."/>
            <person name="Hoffman J."/>
            <person name="Till S."/>
            <person name="Granat S."/>
            <person name="Shohdy N."/>
            <person name="Hasegawa A."/>
            <person name="Hameed A."/>
            <person name="Lodhi M."/>
            <person name="Johnson A."/>
            <person name="Chen E."/>
            <person name="Marra M.A."/>
            <person name="Martienssen R."/>
            <person name="McCombie W.R."/>
        </authorList>
    </citation>
    <scope>NUCLEOTIDE SEQUENCE [LARGE SCALE GENOMIC DNA]</scope>
    <source>
        <strain>cv. Columbia</strain>
    </source>
</reference>
<reference key="2">
    <citation type="journal article" date="2017" name="Plant J.">
        <title>Araport11: a complete reannotation of the Arabidopsis thaliana reference genome.</title>
        <authorList>
            <person name="Cheng C.Y."/>
            <person name="Krishnakumar V."/>
            <person name="Chan A.P."/>
            <person name="Thibaud-Nissen F."/>
            <person name="Schobel S."/>
            <person name="Town C.D."/>
        </authorList>
    </citation>
    <scope>GENOME REANNOTATION</scope>
    <source>
        <strain>cv. Columbia</strain>
    </source>
</reference>
<keyword id="KW-1185">Reference proteome</keyword>
<keyword id="KW-0833">Ubl conjugation pathway</keyword>
<gene>
    <name type="ordered locus">At4g35733</name>
    <name type="ORF">F8D20.250</name>
</gene>
<comment type="function">
    <text evidence="1">Component of SCF(ASK-cullin-F-box) E3 ubiquitin ligase complexes, which may mediate the ubiquitination and subsequent proteasomal degradation of target proteins.</text>
</comment>
<comment type="pathway">
    <text>Protein modification; protein ubiquitination.</text>
</comment>
<comment type="subunit">
    <text evidence="1">Part of a SCF (ASK-cullin-F-box) protein ligase complex.</text>
</comment>
<comment type="sequence caution" evidence="2">
    <conflict type="erroneous gene model prediction">
        <sequence resource="EMBL-CDS" id="CAA20044"/>
    </conflict>
    <text>The predicted gene At4g35740 has been split into 2 genes: At4g35733 and At4g35740.</text>
</comment>
<comment type="sequence caution" evidence="2">
    <conflict type="erroneous gene model prediction">
        <sequence resource="EMBL-CDS" id="CAB81483"/>
    </conflict>
    <text>The predicted gene At4g35740 has been split into 2 genes: At4g35733 and At4g35740.</text>
</comment>
<sequence length="358" mass="41399">MSEATVWSDLPGELLDHIANGLFSKVELLRFRSICKTFRSAVDSDKNFLDHLKRNRRRLLSPYSTGKTCSLSPAAFYRVVLSSYPDKGWLIKLQDAYVSSQKQLLSPLSRFSIKSSGKTLDLLEFTVSEIHQSYDVEYLYYNSTRASFNFARVVLAEDFVFIVDNYKKIWLCNSNESDSHWVRIMDEEVKLFSDIVFHKGYMYALDLTGAVWWISLSEFGIFQFGPSSTPMDYCDIDECKDKRFVEYCGDLCIVHRFSRKFRIKRVDIDMTVGFKVYKMDEELVEYVEVKSLGDKAFVMATDSCFSVLAREYYGCLENSIYFTEQNNVKVFKLGDGSITNMVDSSFQSCFQMLIPPLV</sequence>
<feature type="chain" id="PRO_0000394526" description="F-box protein At4g35733">
    <location>
        <begin position="1"/>
        <end position="358"/>
    </location>
</feature>
<feature type="domain" description="F-box">
    <location>
        <begin position="4"/>
        <end position="51"/>
    </location>
</feature>
<evidence type="ECO:0000250" key="1"/>
<evidence type="ECO:0000305" key="2"/>